<reference key="1">
    <citation type="journal article" date="1998" name="J. Clin. Microbiol.">
        <title>Identification of streptococci to species level by sequencing the gene encoding the manganese-dependent superoxide dismutase.</title>
        <authorList>
            <person name="Poyart C."/>
            <person name="Quesne G."/>
            <person name="Coulon S."/>
            <person name="Berche P."/>
            <person name="Trieu-Cuot P."/>
        </authorList>
    </citation>
    <scope>NUCLEOTIDE SEQUENCE [GENOMIC DNA]</scope>
    <source>
        <strain>ATCC 13419 / CIP 102505 / C699</strain>
        <strain>ATCC 7073 / CIP 102503 / DSM 20560 / JCM 5707 / NCTC 8618</strain>
        <strain>NEM1250</strain>
        <strain>NEM1257</strain>
    </source>
</reference>
<keyword id="KW-0408">Iron</keyword>
<keyword id="KW-0464">Manganese</keyword>
<keyword id="KW-0479">Metal-binding</keyword>
<keyword id="KW-0560">Oxidoreductase</keyword>
<gene>
    <name type="primary">sodA</name>
</gene>
<organism>
    <name type="scientific">Streptococcus salivarius</name>
    <dbReference type="NCBI Taxonomy" id="1304"/>
    <lineage>
        <taxon>Bacteria</taxon>
        <taxon>Bacillati</taxon>
        <taxon>Bacillota</taxon>
        <taxon>Bacilli</taxon>
        <taxon>Lactobacillales</taxon>
        <taxon>Streptococcaceae</taxon>
        <taxon>Streptococcus</taxon>
    </lineage>
</organism>
<accession>O33783</accession>
<accession>O33782</accession>
<evidence type="ECO:0000250" key="1">
    <source>
        <dbReference type="UniProtKB" id="P80293"/>
    </source>
</evidence>
<evidence type="ECO:0000305" key="2"/>
<protein>
    <recommendedName>
        <fullName>Superoxide dismutase [Mn/Fe]</fullName>
        <ecNumber evidence="1">1.15.1.1</ecNumber>
    </recommendedName>
</protein>
<proteinExistence type="inferred from homology"/>
<feature type="chain" id="PRO_0000160105" description="Superoxide dismutase [Mn/Fe]">
    <location>
        <begin position="1" status="less than"/>
        <end position="145" status="greater than"/>
    </location>
</feature>
<feature type="binding site" evidence="1">
    <location>
        <position position="10"/>
    </location>
    <ligand>
        <name>Fe(3+)</name>
        <dbReference type="ChEBI" id="CHEBI:29034"/>
    </ligand>
</feature>
<feature type="binding site" evidence="1">
    <location>
        <position position="10"/>
    </location>
    <ligand>
        <name>Mn(2+)</name>
        <dbReference type="ChEBI" id="CHEBI:29035"/>
    </ligand>
</feature>
<feature type="binding site" evidence="1">
    <location>
        <position position="64"/>
    </location>
    <ligand>
        <name>Fe(3+)</name>
        <dbReference type="ChEBI" id="CHEBI:29034"/>
    </ligand>
</feature>
<feature type="binding site" evidence="1">
    <location>
        <position position="64"/>
    </location>
    <ligand>
        <name>Mn(2+)</name>
        <dbReference type="ChEBI" id="CHEBI:29035"/>
    </ligand>
</feature>
<feature type="sequence variant" description="In strain: CIP 102503T and NEM1250.">
    <original>D</original>
    <variation>A</variation>
    <location>
        <position position="119"/>
    </location>
</feature>
<feature type="non-terminal residue">
    <location>
        <position position="1"/>
    </location>
</feature>
<feature type="non-terminal residue">
    <location>
        <position position="145"/>
    </location>
</feature>
<name>SODM_STRSL</name>
<sequence>YIDAETMTLHHDKHHATYVANANAALEKHPEIGEDLEALLADVEQIPADIRQALINNGGGHLNHALFWELLSPEKQEPTAEVAAAINEAFGSFEAFQEAFTAAATTRFGSGWAWLVVNDEGKLEVVSTANQDTPISDGKKPILAL</sequence>
<comment type="function">
    <text evidence="1">Destroys superoxide anion radicals which are normally produced within the cells and which are toxic to biological systems. Catalyzes the dismutation of superoxide anion radicals into O2 and H2O2 by successive reduction and oxidation of the transition metal ion at the active site.</text>
</comment>
<comment type="catalytic activity">
    <reaction evidence="1">
        <text>2 superoxide + 2 H(+) = H2O2 + O2</text>
        <dbReference type="Rhea" id="RHEA:20696"/>
        <dbReference type="ChEBI" id="CHEBI:15378"/>
        <dbReference type="ChEBI" id="CHEBI:15379"/>
        <dbReference type="ChEBI" id="CHEBI:16240"/>
        <dbReference type="ChEBI" id="CHEBI:18421"/>
        <dbReference type="EC" id="1.15.1.1"/>
    </reaction>
    <physiologicalReaction direction="left-to-right" evidence="1">
        <dbReference type="Rhea" id="RHEA:20697"/>
    </physiologicalReaction>
</comment>
<comment type="cofactor">
    <cofactor evidence="1">
        <name>Mn(2+)</name>
        <dbReference type="ChEBI" id="CHEBI:29035"/>
    </cofactor>
    <cofactor evidence="1">
        <name>Fe(3+)</name>
        <dbReference type="ChEBI" id="CHEBI:29034"/>
    </cofactor>
    <text evidence="1">Binds 1 Mn(2+) or Fe(3+) ion per subunit.</text>
</comment>
<comment type="similarity">
    <text evidence="2">Belongs to the iron/manganese superoxide dismutase family.</text>
</comment>
<dbReference type="EC" id="1.15.1.1" evidence="1"/>
<dbReference type="EMBL" id="Z95916">
    <property type="protein sequence ID" value="CAB09369.1"/>
    <property type="molecule type" value="Genomic_DNA"/>
</dbReference>
<dbReference type="EMBL" id="Z95917">
    <property type="protein sequence ID" value="CAB09370.1"/>
    <property type="molecule type" value="Genomic_DNA"/>
</dbReference>
<dbReference type="EMBL" id="Z99197">
    <property type="protein sequence ID" value="CAB16341.1"/>
    <property type="molecule type" value="Genomic_DNA"/>
</dbReference>
<dbReference type="EMBL" id="Z99198">
    <property type="protein sequence ID" value="CAB16342.1"/>
    <property type="molecule type" value="Genomic_DNA"/>
</dbReference>
<dbReference type="EMBL" id="Z99199">
    <property type="protein sequence ID" value="CAB16343.1"/>
    <property type="molecule type" value="Genomic_DNA"/>
</dbReference>
<dbReference type="SMR" id="O33783"/>
<dbReference type="STRING" id="1304.HMPREF3219_0201801"/>
<dbReference type="GO" id="GO:0005737">
    <property type="term" value="C:cytoplasm"/>
    <property type="evidence" value="ECO:0007669"/>
    <property type="project" value="TreeGrafter"/>
</dbReference>
<dbReference type="GO" id="GO:0046872">
    <property type="term" value="F:metal ion binding"/>
    <property type="evidence" value="ECO:0007669"/>
    <property type="project" value="UniProtKB-KW"/>
</dbReference>
<dbReference type="GO" id="GO:0004784">
    <property type="term" value="F:superoxide dismutase activity"/>
    <property type="evidence" value="ECO:0007669"/>
    <property type="project" value="UniProtKB-EC"/>
</dbReference>
<dbReference type="FunFam" id="1.10.287.990:FF:000001">
    <property type="entry name" value="Superoxide dismutase"/>
    <property type="match status" value="1"/>
</dbReference>
<dbReference type="Gene3D" id="1.10.287.990">
    <property type="entry name" value="Fe,Mn superoxide dismutase (SOD) domain"/>
    <property type="match status" value="1"/>
</dbReference>
<dbReference type="Gene3D" id="3.55.40.20">
    <property type="entry name" value="Iron/manganese superoxide dismutase, C-terminal domain"/>
    <property type="match status" value="1"/>
</dbReference>
<dbReference type="InterPro" id="IPR001189">
    <property type="entry name" value="Mn/Fe_SOD"/>
</dbReference>
<dbReference type="InterPro" id="IPR019832">
    <property type="entry name" value="Mn/Fe_SOD_C"/>
</dbReference>
<dbReference type="InterPro" id="IPR019831">
    <property type="entry name" value="Mn/Fe_SOD_N"/>
</dbReference>
<dbReference type="InterPro" id="IPR036324">
    <property type="entry name" value="Mn/Fe_SOD_N_sf"/>
</dbReference>
<dbReference type="InterPro" id="IPR036314">
    <property type="entry name" value="SOD_C_sf"/>
</dbReference>
<dbReference type="PANTHER" id="PTHR43595">
    <property type="entry name" value="37S RIBOSOMAL PROTEIN S26, MITOCHONDRIAL"/>
    <property type="match status" value="1"/>
</dbReference>
<dbReference type="PANTHER" id="PTHR43595:SF2">
    <property type="entry name" value="SMALL RIBOSOMAL SUBUNIT PROTEIN MS42"/>
    <property type="match status" value="1"/>
</dbReference>
<dbReference type="Pfam" id="PF02777">
    <property type="entry name" value="Sod_Fe_C"/>
    <property type="match status" value="1"/>
</dbReference>
<dbReference type="Pfam" id="PF00081">
    <property type="entry name" value="Sod_Fe_N"/>
    <property type="match status" value="1"/>
</dbReference>
<dbReference type="PRINTS" id="PR01703">
    <property type="entry name" value="MNSODISMTASE"/>
</dbReference>
<dbReference type="SUPFAM" id="SSF54719">
    <property type="entry name" value="Fe,Mn superoxide dismutase (SOD), C-terminal domain"/>
    <property type="match status" value="1"/>
</dbReference>
<dbReference type="SUPFAM" id="SSF46609">
    <property type="entry name" value="Fe,Mn superoxide dismutase (SOD), N-terminal domain"/>
    <property type="match status" value="1"/>
</dbReference>